<dbReference type="EMBL" id="AABR03000917">
    <property type="status" value="NOT_ANNOTATED_CDS"/>
    <property type="molecule type" value="Genomic_DNA"/>
</dbReference>
<dbReference type="EMBL" id="AY057065">
    <property type="protein sequence ID" value="AAL23696.1"/>
    <property type="status" value="ALT_INIT"/>
    <property type="molecule type" value="mRNA"/>
</dbReference>
<dbReference type="SMR" id="Q91Z79"/>
<dbReference type="CORUM" id="Q91Z79"/>
<dbReference type="FunCoup" id="Q91Z79">
    <property type="interactions" value="1487"/>
</dbReference>
<dbReference type="IntAct" id="Q91Z79">
    <property type="interactions" value="1"/>
</dbReference>
<dbReference type="MINT" id="Q91Z79"/>
<dbReference type="STRING" id="10116.ENSRNOP00000028142"/>
<dbReference type="GlyGen" id="Q91Z79">
    <property type="glycosylation" value="1 site"/>
</dbReference>
<dbReference type="iPTMnet" id="Q91Z79"/>
<dbReference type="PhosphoSitePlus" id="Q91Z79"/>
<dbReference type="SwissPalm" id="Q91Z79"/>
<dbReference type="jPOST" id="Q91Z79"/>
<dbReference type="PaxDb" id="10116-ENSRNOP00000028142"/>
<dbReference type="UCSC" id="RGD:620054">
    <property type="organism name" value="rat"/>
</dbReference>
<dbReference type="AGR" id="RGD:620054"/>
<dbReference type="RGD" id="620054">
    <property type="gene designation" value="Ppfia3"/>
</dbReference>
<dbReference type="eggNOG" id="KOG0249">
    <property type="taxonomic scope" value="Eukaryota"/>
</dbReference>
<dbReference type="InParanoid" id="Q91Z79"/>
<dbReference type="PhylomeDB" id="Q91Z79"/>
<dbReference type="Reactome" id="R-RNO-181429">
    <property type="pathway name" value="Serotonin Neurotransmitter Release Cycle"/>
</dbReference>
<dbReference type="Reactome" id="R-RNO-181430">
    <property type="pathway name" value="Norepinephrine Neurotransmitter Release Cycle"/>
</dbReference>
<dbReference type="Reactome" id="R-RNO-210500">
    <property type="pathway name" value="Glutamate Neurotransmitter Release Cycle"/>
</dbReference>
<dbReference type="Reactome" id="R-RNO-212676">
    <property type="pathway name" value="Dopamine Neurotransmitter Release Cycle"/>
</dbReference>
<dbReference type="Reactome" id="R-RNO-264642">
    <property type="pathway name" value="Acetylcholine Neurotransmitter Release Cycle"/>
</dbReference>
<dbReference type="Reactome" id="R-RNO-388844">
    <property type="pathway name" value="Receptor-type tyrosine-protein phosphatases"/>
</dbReference>
<dbReference type="PRO" id="PR:Q91Z79"/>
<dbReference type="Proteomes" id="UP000002494">
    <property type="component" value="Unplaced"/>
</dbReference>
<dbReference type="GO" id="GO:0001669">
    <property type="term" value="C:acrosomal vesicle"/>
    <property type="evidence" value="ECO:0000314"/>
    <property type="project" value="UniProtKB"/>
</dbReference>
<dbReference type="GO" id="GO:0005737">
    <property type="term" value="C:cytoplasm"/>
    <property type="evidence" value="ECO:0000314"/>
    <property type="project" value="UniProtKB"/>
</dbReference>
<dbReference type="GO" id="GO:0098875">
    <property type="term" value="C:epididymosome"/>
    <property type="evidence" value="ECO:0000314"/>
    <property type="project" value="UniProtKB"/>
</dbReference>
<dbReference type="GO" id="GO:0098978">
    <property type="term" value="C:glutamatergic synapse"/>
    <property type="evidence" value="ECO:0000266"/>
    <property type="project" value="RGD"/>
</dbReference>
<dbReference type="GO" id="GO:0048786">
    <property type="term" value="C:presynaptic active zone"/>
    <property type="evidence" value="ECO:0000266"/>
    <property type="project" value="RGD"/>
</dbReference>
<dbReference type="GO" id="GO:0098831">
    <property type="term" value="C:presynaptic active zone cytoplasmic component"/>
    <property type="evidence" value="ECO:0000266"/>
    <property type="project" value="RGD"/>
</dbReference>
<dbReference type="GO" id="GO:0045202">
    <property type="term" value="C:synapse"/>
    <property type="evidence" value="ECO:0000266"/>
    <property type="project" value="RGD"/>
</dbReference>
<dbReference type="GO" id="GO:0007269">
    <property type="term" value="P:neurotransmitter secretion"/>
    <property type="evidence" value="ECO:0000315"/>
    <property type="project" value="RGD"/>
</dbReference>
<dbReference type="GO" id="GO:0048172">
    <property type="term" value="P:regulation of short-term neuronal synaptic plasticity"/>
    <property type="evidence" value="ECO:0000315"/>
    <property type="project" value="RGD"/>
</dbReference>
<dbReference type="GO" id="GO:0050808">
    <property type="term" value="P:synapse organization"/>
    <property type="evidence" value="ECO:0000318"/>
    <property type="project" value="GO_Central"/>
</dbReference>
<dbReference type="GO" id="GO:0016081">
    <property type="term" value="P:synaptic vesicle docking"/>
    <property type="evidence" value="ECO:0000266"/>
    <property type="project" value="RGD"/>
</dbReference>
<dbReference type="GO" id="GO:0016079">
    <property type="term" value="P:synaptic vesicle exocytosis"/>
    <property type="evidence" value="ECO:0000266"/>
    <property type="project" value="RGD"/>
</dbReference>
<dbReference type="CDD" id="cd09562">
    <property type="entry name" value="SAM_liprin-alpha1_2_3_4_repeat1"/>
    <property type="match status" value="1"/>
</dbReference>
<dbReference type="CDD" id="cd09565">
    <property type="entry name" value="SAM_liprin-alpha1_2_3_4_repeat2"/>
    <property type="match status" value="1"/>
</dbReference>
<dbReference type="CDD" id="cd09568">
    <property type="entry name" value="SAM_liprin-alpha1_2_3_4_repeat3"/>
    <property type="match status" value="1"/>
</dbReference>
<dbReference type="FunFam" id="1.10.150.50:FF:000003">
    <property type="entry name" value="liprin-alpha-2 isoform X1"/>
    <property type="match status" value="1"/>
</dbReference>
<dbReference type="FunFam" id="1.10.150.50:FF:000002">
    <property type="entry name" value="PTPRF interacting protein alpha 1"/>
    <property type="match status" value="1"/>
</dbReference>
<dbReference type="FunFam" id="1.10.150.50:FF:000004">
    <property type="entry name" value="PTPRF interacting protein alpha 1"/>
    <property type="match status" value="1"/>
</dbReference>
<dbReference type="Gene3D" id="1.10.287.1490">
    <property type="match status" value="1"/>
</dbReference>
<dbReference type="Gene3D" id="1.10.150.50">
    <property type="entry name" value="Transcription Factor, Ets-1"/>
    <property type="match status" value="3"/>
</dbReference>
<dbReference type="InterPro" id="IPR029515">
    <property type="entry name" value="Liprin"/>
</dbReference>
<dbReference type="InterPro" id="IPR037620">
    <property type="entry name" value="Liprin-alpha_SAM_rpt_1"/>
</dbReference>
<dbReference type="InterPro" id="IPR037621">
    <property type="entry name" value="Liprin-alpha_SAM_rpt_2"/>
</dbReference>
<dbReference type="InterPro" id="IPR037622">
    <property type="entry name" value="Liprin-alpha_SAM_rpt_3"/>
</dbReference>
<dbReference type="InterPro" id="IPR001660">
    <property type="entry name" value="SAM"/>
</dbReference>
<dbReference type="InterPro" id="IPR013761">
    <property type="entry name" value="SAM/pointed_sf"/>
</dbReference>
<dbReference type="PANTHER" id="PTHR12587">
    <property type="entry name" value="LAR INTERACTING PROTEIN LIP -RELATED PROTEIN"/>
    <property type="match status" value="1"/>
</dbReference>
<dbReference type="PANTHER" id="PTHR12587:SF4">
    <property type="entry name" value="LIPRIN-ALPHA-3"/>
    <property type="match status" value="1"/>
</dbReference>
<dbReference type="Pfam" id="PF00536">
    <property type="entry name" value="SAM_1"/>
    <property type="match status" value="2"/>
</dbReference>
<dbReference type="Pfam" id="PF07647">
    <property type="entry name" value="SAM_2"/>
    <property type="match status" value="1"/>
</dbReference>
<dbReference type="SMART" id="SM00454">
    <property type="entry name" value="SAM"/>
    <property type="match status" value="3"/>
</dbReference>
<dbReference type="SUPFAM" id="SSF47769">
    <property type="entry name" value="SAM/Pointed domain"/>
    <property type="match status" value="3"/>
</dbReference>
<dbReference type="PROSITE" id="PS50105">
    <property type="entry name" value="SAM_DOMAIN"/>
    <property type="match status" value="3"/>
</dbReference>
<evidence type="ECO:0000250" key="1">
    <source>
        <dbReference type="UniProtKB" id="O75145"/>
    </source>
</evidence>
<evidence type="ECO:0000250" key="2">
    <source>
        <dbReference type="UniProtKB" id="P60469"/>
    </source>
</evidence>
<evidence type="ECO:0000250" key="3">
    <source>
        <dbReference type="UniProtKB" id="Q13136"/>
    </source>
</evidence>
<evidence type="ECO:0000255" key="4"/>
<evidence type="ECO:0000255" key="5">
    <source>
        <dbReference type="PROSITE-ProRule" id="PRU00184"/>
    </source>
</evidence>
<evidence type="ECO:0000256" key="6">
    <source>
        <dbReference type="SAM" id="MobiDB-lite"/>
    </source>
</evidence>
<evidence type="ECO:0000269" key="7">
    <source>
    </source>
</evidence>
<evidence type="ECO:0000269" key="8">
    <source>
    </source>
</evidence>
<evidence type="ECO:0000269" key="9">
    <source>
    </source>
</evidence>
<evidence type="ECO:0000269" key="10">
    <source>
    </source>
</evidence>
<evidence type="ECO:0000305" key="11"/>
<evidence type="ECO:0007744" key="12">
    <source>
    </source>
</evidence>
<protein>
    <recommendedName>
        <fullName>Liprin-alpha-3</fullName>
    </recommendedName>
    <alternativeName>
        <fullName>Protein tyrosine phosphatase receptor type f polypeptide-interacting protein alpha-3</fullName>
        <shortName>PTPRF-interacting protein alpha-3</shortName>
    </alternativeName>
</protein>
<reference key="1">
    <citation type="journal article" date="2004" name="Nature">
        <title>Genome sequence of the Brown Norway rat yields insights into mammalian evolution.</title>
        <authorList>
            <person name="Gibbs R.A."/>
            <person name="Weinstock G.M."/>
            <person name="Metzker M.L."/>
            <person name="Muzny D.M."/>
            <person name="Sodergren E.J."/>
            <person name="Scherer S."/>
            <person name="Scott G."/>
            <person name="Steffen D."/>
            <person name="Worley K.C."/>
            <person name="Burch P.E."/>
            <person name="Okwuonu G."/>
            <person name="Hines S."/>
            <person name="Lewis L."/>
            <person name="Deramo C."/>
            <person name="Delgado O."/>
            <person name="Dugan-Rocha S."/>
            <person name="Miner G."/>
            <person name="Morgan M."/>
            <person name="Hawes A."/>
            <person name="Gill R."/>
            <person name="Holt R.A."/>
            <person name="Adams M.D."/>
            <person name="Amanatides P.G."/>
            <person name="Baden-Tillson H."/>
            <person name="Barnstead M."/>
            <person name="Chin S."/>
            <person name="Evans C.A."/>
            <person name="Ferriera S."/>
            <person name="Fosler C."/>
            <person name="Glodek A."/>
            <person name="Gu Z."/>
            <person name="Jennings D."/>
            <person name="Kraft C.L."/>
            <person name="Nguyen T."/>
            <person name="Pfannkoch C.M."/>
            <person name="Sitter C."/>
            <person name="Sutton G.G."/>
            <person name="Venter J.C."/>
            <person name="Woodage T."/>
            <person name="Smith D."/>
            <person name="Lee H.-M."/>
            <person name="Gustafson E."/>
            <person name="Cahill P."/>
            <person name="Kana A."/>
            <person name="Doucette-Stamm L."/>
            <person name="Weinstock K."/>
            <person name="Fechtel K."/>
            <person name="Weiss R.B."/>
            <person name="Dunn D.M."/>
            <person name="Green E.D."/>
            <person name="Blakesley R.W."/>
            <person name="Bouffard G.G."/>
            <person name="De Jong P.J."/>
            <person name="Osoegawa K."/>
            <person name="Zhu B."/>
            <person name="Marra M."/>
            <person name="Schein J."/>
            <person name="Bosdet I."/>
            <person name="Fjell C."/>
            <person name="Jones S."/>
            <person name="Krzywinski M."/>
            <person name="Mathewson C."/>
            <person name="Siddiqui A."/>
            <person name="Wye N."/>
            <person name="McPherson J."/>
            <person name="Zhao S."/>
            <person name="Fraser C.M."/>
            <person name="Shetty J."/>
            <person name="Shatsman S."/>
            <person name="Geer K."/>
            <person name="Chen Y."/>
            <person name="Abramzon S."/>
            <person name="Nierman W.C."/>
            <person name="Havlak P.H."/>
            <person name="Chen R."/>
            <person name="Durbin K.J."/>
            <person name="Egan A."/>
            <person name="Ren Y."/>
            <person name="Song X.-Z."/>
            <person name="Li B."/>
            <person name="Liu Y."/>
            <person name="Qin X."/>
            <person name="Cawley S."/>
            <person name="Cooney A.J."/>
            <person name="D'Souza L.M."/>
            <person name="Martin K."/>
            <person name="Wu J.Q."/>
            <person name="Gonzalez-Garay M.L."/>
            <person name="Jackson A.R."/>
            <person name="Kalafus K.J."/>
            <person name="McLeod M.P."/>
            <person name="Milosavljevic A."/>
            <person name="Virk D."/>
            <person name="Volkov A."/>
            <person name="Wheeler D.A."/>
            <person name="Zhang Z."/>
            <person name="Bailey J.A."/>
            <person name="Eichler E.E."/>
            <person name="Tuzun E."/>
            <person name="Birney E."/>
            <person name="Mongin E."/>
            <person name="Ureta-Vidal A."/>
            <person name="Woodwark C."/>
            <person name="Zdobnov E."/>
            <person name="Bork P."/>
            <person name="Suyama M."/>
            <person name="Torrents D."/>
            <person name="Alexandersson M."/>
            <person name="Trask B.J."/>
            <person name="Young J.M."/>
            <person name="Huang H."/>
            <person name="Wang H."/>
            <person name="Xing H."/>
            <person name="Daniels S."/>
            <person name="Gietzen D."/>
            <person name="Schmidt J."/>
            <person name="Stevens K."/>
            <person name="Vitt U."/>
            <person name="Wingrove J."/>
            <person name="Camara F."/>
            <person name="Mar Alba M."/>
            <person name="Abril J.F."/>
            <person name="Guigo R."/>
            <person name="Smit A."/>
            <person name="Dubchak I."/>
            <person name="Rubin E.M."/>
            <person name="Couronne O."/>
            <person name="Poliakov A."/>
            <person name="Huebner N."/>
            <person name="Ganten D."/>
            <person name="Goesele C."/>
            <person name="Hummel O."/>
            <person name="Kreitler T."/>
            <person name="Lee Y.-A."/>
            <person name="Monti J."/>
            <person name="Schulz H."/>
            <person name="Zimdahl H."/>
            <person name="Himmelbauer H."/>
            <person name="Lehrach H."/>
            <person name="Jacob H.J."/>
            <person name="Bromberg S."/>
            <person name="Gullings-Handley J."/>
            <person name="Jensen-Seaman M.I."/>
            <person name="Kwitek A.E."/>
            <person name="Lazar J."/>
            <person name="Pasko D."/>
            <person name="Tonellato P.J."/>
            <person name="Twigger S."/>
            <person name="Ponting C.P."/>
            <person name="Duarte J.M."/>
            <person name="Rice S."/>
            <person name="Goodstadt L."/>
            <person name="Beatson S.A."/>
            <person name="Emes R.D."/>
            <person name="Winter E.E."/>
            <person name="Webber C."/>
            <person name="Brandt P."/>
            <person name="Nyakatura G."/>
            <person name="Adetobi M."/>
            <person name="Chiaromonte F."/>
            <person name="Elnitski L."/>
            <person name="Eswara P."/>
            <person name="Hardison R.C."/>
            <person name="Hou M."/>
            <person name="Kolbe D."/>
            <person name="Makova K."/>
            <person name="Miller W."/>
            <person name="Nekrutenko A."/>
            <person name="Riemer C."/>
            <person name="Schwartz S."/>
            <person name="Taylor J."/>
            <person name="Yang S."/>
            <person name="Zhang Y."/>
            <person name="Lindpaintner K."/>
            <person name="Andrews T.D."/>
            <person name="Caccamo M."/>
            <person name="Clamp M."/>
            <person name="Clarke L."/>
            <person name="Curwen V."/>
            <person name="Durbin R.M."/>
            <person name="Eyras E."/>
            <person name="Searle S.M."/>
            <person name="Cooper G.M."/>
            <person name="Batzoglou S."/>
            <person name="Brudno M."/>
            <person name="Sidow A."/>
            <person name="Stone E.A."/>
            <person name="Payseur B.A."/>
            <person name="Bourque G."/>
            <person name="Lopez-Otin C."/>
            <person name="Puente X.S."/>
            <person name="Chakrabarti K."/>
            <person name="Chatterji S."/>
            <person name="Dewey C."/>
            <person name="Pachter L."/>
            <person name="Bray N."/>
            <person name="Yap V.B."/>
            <person name="Caspi A."/>
            <person name="Tesler G."/>
            <person name="Pevzner P.A."/>
            <person name="Haussler D."/>
            <person name="Roskin K.M."/>
            <person name="Baertsch R."/>
            <person name="Clawson H."/>
            <person name="Furey T.S."/>
            <person name="Hinrichs A.S."/>
            <person name="Karolchik D."/>
            <person name="Kent W.J."/>
            <person name="Rosenbloom K.R."/>
            <person name="Trumbower H."/>
            <person name="Weirauch M."/>
            <person name="Cooper D.N."/>
            <person name="Stenson P.D."/>
            <person name="Ma B."/>
            <person name="Brent M."/>
            <person name="Arumugam M."/>
            <person name="Shteynberg D."/>
            <person name="Copley R.R."/>
            <person name="Taylor M.S."/>
            <person name="Riethman H."/>
            <person name="Mudunuri U."/>
            <person name="Peterson J."/>
            <person name="Guyer M."/>
            <person name="Felsenfeld A."/>
            <person name="Old S."/>
            <person name="Mockrin S."/>
            <person name="Collins F.S."/>
        </authorList>
    </citation>
    <scope>NUCLEOTIDE SEQUENCE [LARGE SCALE GENOMIC DNA]</scope>
    <source>
        <strain>Brown Norway</strain>
    </source>
</reference>
<reference key="2">
    <citation type="journal article" date="2002" name="Nature">
        <title>RIM1alpha forms a protein scaffold for regulating neurotransmitter release at the active zone.</title>
        <authorList>
            <person name="Schoch S."/>
            <person name="Castillo P.E."/>
            <person name="Jo T."/>
            <person name="Mukherjee K."/>
            <person name="Geppert M."/>
            <person name="Wang Y."/>
            <person name="Schmitz F."/>
            <person name="Malenka R.C."/>
            <person name="Suedhof T.C."/>
        </authorList>
    </citation>
    <scope>NUCLEOTIDE SEQUENCE [MRNA] OF 1-992</scope>
    <scope>INTERACTION WITH RIMS1 AND RIMS2</scope>
    <source>
        <strain>Sprague-Dawley</strain>
        <tissue>Brain</tissue>
    </source>
</reference>
<reference key="3">
    <citation type="submission" date="2007-09" db="UniProtKB">
        <authorList>
            <person name="Lubec G."/>
            <person name="Kang S.U."/>
            <person name="Lubec S."/>
        </authorList>
    </citation>
    <scope>PROTEIN SEQUENCE OF 172-180; 305-310 AND 361-367</scope>
    <scope>IDENTIFICATION BY MASS SPECTROMETRY</scope>
    <source>
        <strain>Sprague-Dawley</strain>
        <tissue>Brain</tissue>
    </source>
</reference>
<reference key="4">
    <citation type="journal article" date="2003" name="Genomics">
        <title>Genomic definition of RIM proteins: evolutionary amplification of a family of synaptic regulatory proteins.</title>
        <authorList>
            <person name="Wang Y."/>
            <person name="Suedhof T.C."/>
        </authorList>
    </citation>
    <scope>INTERACTION WITH RIMS3 AND RIMS4</scope>
</reference>
<reference key="5">
    <citation type="journal article" date="2011" name="J. Androl.">
        <title>Differential proteomics leads to identification of domain specific epididymal sperm proteins.</title>
        <authorList>
            <person name="Suryawanshi A.R."/>
            <person name="Khan S.A."/>
            <person name="Gajbhiye R.K."/>
            <person name="Gurav M.Y."/>
            <person name="Khole V.V."/>
        </authorList>
    </citation>
    <scope>IDENTIFICATION BY MASS SPECTROMETRY</scope>
    <scope>TISSUE SPECIFICITY</scope>
    <scope>MASS SPECTROMETRY</scope>
    <source>
        <strain>Holtzman</strain>
        <tissue>Sperm</tissue>
    </source>
</reference>
<reference key="6">
    <citation type="journal article" date="2012" name="Nat. Commun.">
        <title>Quantitative maps of protein phosphorylation sites across 14 different rat organs and tissues.</title>
        <authorList>
            <person name="Lundby A."/>
            <person name="Secher A."/>
            <person name="Lage K."/>
            <person name="Nordsborg N.B."/>
            <person name="Dmytriyev A."/>
            <person name="Lundby C."/>
            <person name="Olsen J.V."/>
        </authorList>
    </citation>
    <scope>PHOSPHORYLATION [LARGE SCALE ANALYSIS] AT SER-142; THR-712; THR-790 AND SER-792</scope>
    <scope>IDENTIFICATION BY MASS SPECTROMETRY [LARGE SCALE ANALYSIS]</scope>
</reference>
<reference key="7">
    <citation type="journal article" date="2013" name="Histochem. Cell Biol.">
        <title>Liprin alpha3: a putative estrogen regulated acrosomal protein.</title>
        <authorList>
            <person name="Joshi C.S."/>
            <person name="Suryawanshi A.R."/>
            <person name="Khan S.A."/>
            <person name="Balasinor N.H."/>
            <person name="Khole V.V."/>
        </authorList>
    </citation>
    <scope>SUBCELLULAR LOCATION</scope>
    <scope>TISSUE SPECIFICITY</scope>
    <scope>DEVELOPMENTAL STAGE</scope>
    <scope>INDUCTION</scope>
</reference>
<proteinExistence type="evidence at protein level"/>
<feature type="chain" id="PRO_0000191031" description="Liprin-alpha-3">
    <location>
        <begin position="1"/>
        <end position="1192"/>
    </location>
</feature>
<feature type="domain" description="SAM 1" evidence="5">
    <location>
        <begin position="836"/>
        <end position="902"/>
    </location>
</feature>
<feature type="domain" description="SAM 2" evidence="5">
    <location>
        <begin position="951"/>
        <end position="1015"/>
    </location>
</feature>
<feature type="domain" description="SAM 3" evidence="5">
    <location>
        <begin position="1039"/>
        <end position="1108"/>
    </location>
</feature>
<feature type="region of interest" description="Disordered" evidence="6">
    <location>
        <begin position="1"/>
        <end position="23"/>
    </location>
</feature>
<feature type="region of interest" description="Disordered" evidence="6">
    <location>
        <begin position="201"/>
        <end position="239"/>
    </location>
</feature>
<feature type="region of interest" description="Disordered" evidence="6">
    <location>
        <begin position="521"/>
        <end position="587"/>
    </location>
</feature>
<feature type="region of interest" description="Disordered" evidence="6">
    <location>
        <begin position="623"/>
        <end position="815"/>
    </location>
</feature>
<feature type="region of interest" description="Disordered" evidence="6">
    <location>
        <begin position="1155"/>
        <end position="1192"/>
    </location>
</feature>
<feature type="coiled-coil region" evidence="4">
    <location>
        <begin position="26"/>
        <end position="133"/>
    </location>
</feature>
<feature type="coiled-coil region" evidence="4">
    <location>
        <begin position="161"/>
        <end position="501"/>
    </location>
</feature>
<feature type="coiled-coil region" evidence="4">
    <location>
        <begin position="595"/>
        <end position="643"/>
    </location>
</feature>
<feature type="coiled-coil region" evidence="4">
    <location>
        <begin position="1012"/>
        <end position="1038"/>
    </location>
</feature>
<feature type="compositionally biased region" description="Basic and acidic residues" evidence="6">
    <location>
        <begin position="201"/>
        <end position="217"/>
    </location>
</feature>
<feature type="compositionally biased region" description="Basic and acidic residues" evidence="6">
    <location>
        <begin position="547"/>
        <end position="558"/>
    </location>
</feature>
<feature type="compositionally biased region" description="Basic and acidic residues" evidence="6">
    <location>
        <begin position="623"/>
        <end position="635"/>
    </location>
</feature>
<feature type="compositionally biased region" description="Low complexity" evidence="6">
    <location>
        <begin position="650"/>
        <end position="665"/>
    </location>
</feature>
<feature type="compositionally biased region" description="Basic and acidic residues" evidence="6">
    <location>
        <begin position="685"/>
        <end position="699"/>
    </location>
</feature>
<feature type="compositionally biased region" description="Low complexity" evidence="6">
    <location>
        <begin position="1155"/>
        <end position="1167"/>
    </location>
</feature>
<feature type="modified residue" description="Phosphoserine" evidence="1">
    <location>
        <position position="17"/>
    </location>
</feature>
<feature type="modified residue" description="Phosphoserine" evidence="12">
    <location>
        <position position="142"/>
    </location>
</feature>
<feature type="modified residue" description="Phosphoserine" evidence="1">
    <location>
        <position position="207"/>
    </location>
</feature>
<feature type="modified residue" description="Phosphoserine" evidence="3">
    <location>
        <position position="431"/>
    </location>
</feature>
<feature type="modified residue" description="Phosphoserine" evidence="2">
    <location>
        <position position="507"/>
    </location>
</feature>
<feature type="modified residue" description="Phosphoserine" evidence="3">
    <location>
        <position position="639"/>
    </location>
</feature>
<feature type="modified residue" description="Phosphoserine" evidence="2">
    <location>
        <position position="644"/>
    </location>
</feature>
<feature type="modified residue" description="Phosphoserine" evidence="3">
    <location>
        <position position="667"/>
    </location>
</feature>
<feature type="modified residue" description="Phosphoserine" evidence="1">
    <location>
        <position position="682"/>
    </location>
</feature>
<feature type="modified residue" description="Phosphothreonine" evidence="12">
    <location>
        <position position="712"/>
    </location>
</feature>
<feature type="modified residue" description="Phosphoserine" evidence="3">
    <location>
        <position position="735"/>
    </location>
</feature>
<feature type="modified residue" description="Phosphothreonine" evidence="12">
    <location>
        <position position="790"/>
    </location>
</feature>
<feature type="modified residue" description="Phosphoserine" evidence="12">
    <location>
        <position position="792"/>
    </location>
</feature>
<feature type="modified residue" description="Phosphoserine" evidence="3">
    <location>
        <position position="1121"/>
    </location>
</feature>
<feature type="modified residue" description="Phosphoserine" evidence="1">
    <location>
        <position position="1162"/>
    </location>
</feature>
<gene>
    <name type="primary">Ppfia3</name>
</gene>
<organism>
    <name type="scientific">Rattus norvegicus</name>
    <name type="common">Rat</name>
    <dbReference type="NCBI Taxonomy" id="10116"/>
    <lineage>
        <taxon>Eukaryota</taxon>
        <taxon>Metazoa</taxon>
        <taxon>Chordata</taxon>
        <taxon>Craniata</taxon>
        <taxon>Vertebrata</taxon>
        <taxon>Euteleostomi</taxon>
        <taxon>Mammalia</taxon>
        <taxon>Eutheria</taxon>
        <taxon>Euarchontoglires</taxon>
        <taxon>Glires</taxon>
        <taxon>Rodentia</taxon>
        <taxon>Myomorpha</taxon>
        <taxon>Muroidea</taxon>
        <taxon>Muridae</taxon>
        <taxon>Murinae</taxon>
        <taxon>Rattus</taxon>
    </lineage>
</organism>
<keyword id="KW-0175">Coiled coil</keyword>
<keyword id="KW-0963">Cytoplasm</keyword>
<keyword id="KW-0968">Cytoplasmic vesicle</keyword>
<keyword id="KW-0903">Direct protein sequencing</keyword>
<keyword id="KW-0597">Phosphoprotein</keyword>
<keyword id="KW-1185">Reference proteome</keyword>
<keyword id="KW-0677">Repeat</keyword>
<sequence>MMCEVMPTISEDGRRGSALGPDDAGGELERLMVTMLTERERLLETLREAQDGLATAQLRLRELGHEKDSLQRQLSIALPQEFAALTKELNLCREQLLEREEEIAELKAERNNTRLLLEHLECLVSRHERSLRMTVVKRQAQSPGGVSSEVEVLKALKSLFEHHKALDEKVRERLRMALERVAVLEEELELSNQEALNLRDQLSRRRSGLEEPGKDGDGQTLANGLGPVGESSRRTAELEEALERQRAEVCQLRERLAVLCRQMSQLEEELGTAHRELGKAEEANSKLQRDLKEALAQREDMEERITTLEKRYLSAQREATSLHDANDKLENELASKESLYRQSEEKSRQLAEWLDDAKQKLQQTLQKAETLPEIEAQLAQRVAALNKAEERHGNFEERLRQLEAQLEEKNQELQRARQREKMNDDHNKRLSETVDKLLSESNERLQLHLKERMGALEEKNSLSEEIANMKKLQDELLLNKEQLLAEMERMQMEIDQLRGRPPSYSRSLPGSALELRYSQAPTLPSGAPLDPYGAGSGRAGKRGRWSGAKDESSKDWDRSTPAGSIPPPFPGELDGSDEEETEGMFGAELLSPSGQADVQTLAIMLQEQLEAINKEIKLIQEEKETTEQRAEELESRVSSSGLDSLGRYRSSCSLPPSLTTSTLASPSPPSSGHSTPRLAPPSPARETDKTNHVPKDEAGVPRGEGPAIPGDTPPPTPRSARLERMTQALALQAGSLEDGAPPRGSESTPDSLHKAPKRKSIKSSIGRLFGKKEKGRMGPPGRESVSLAGTPSDETLATDPLGLAKLTGPGDKDRRNKRKHELLEEACRQGLPFAAWDGPTVVSWLELWVGMPAWYVAACRANVKSGAIMANLSDTEIQREIGISNPLHRLKLRLAIQEMVSLTSPSAPASSRTPTGNVWMTHEEMESLTAATKPETKEISWEQILAYGDMNHEWVGNDWLPSLGLPQYRSYFMESLVDARMLDHLNKKELREQLKMVDSFHRVSLHYGIMCLKRLNYDRKDLERRREESQTQIRDVMVWSNERVMGWVSGLGLKEFATNLTESGVHGALLALDETFDYSDLALLLQIPTQNAQARQLLEKEFSNLISLGTDRRLDEDSAKSFSRSPSWRKMFREKDLRGVTPDSAEMLPPNFRSAAAGALGSPGLPLRKLQPEGQTSGSSRADGVSVRTYSC</sequence>
<comment type="function">
    <text evidence="1">May regulate the disassembly of focal adhesions. May localize receptor-like tyrosine phosphatases type 2A at specific sites on the plasma membrane, possibly regulating their interaction with the extracellular environment and their association with substrates.</text>
</comment>
<comment type="subunit">
    <text evidence="7 8">Forms homodimers and heterodimers with liprins-alpha and liprins-beta. Interacts with the second PTPase domain of PTPRD, PTPRF and PTPRS. Binds RIMS1, RIMS2, RIMS3 and RIMS4.</text>
</comment>
<comment type="interaction">
    <interactant intactId="EBI-8276993">
        <id>Q91Z79</id>
    </interactant>
    <interactant intactId="EBI-936113">
        <id>P97879</id>
        <label>Grip1</label>
    </interactant>
    <organismsDiffer>false</organismsDiffer>
    <experiments>3</experiments>
</comment>
<comment type="subcellular location">
    <subcellularLocation>
        <location evidence="10">Cytoplasm</location>
    </subcellularLocation>
    <subcellularLocation>
        <location evidence="10">Cytoplasmic vesicle</location>
        <location evidence="10">Secretory vesicle</location>
        <location evidence="10">Acrosome</location>
    </subcellularLocation>
    <text evidence="10">Also detected in epididymosome.</text>
</comment>
<comment type="tissue specificity">
    <text evidence="9 10">Expressed in the head of epididymal sperm but not in testicular sperm (at protein level) (PubMed:20966424, PubMed:23124857). Also detected in epididymis, brain, intestine and lungs (PubMed:23124857).</text>
</comment>
<comment type="developmental stage">
    <text evidence="10">First detected at postnatal day 20 and 40 in testis and epididymis respectively.</text>
</comment>
<comment type="induction">
    <text evidence="10">Down-regulated by tamoxifen.</text>
</comment>
<comment type="domain">
    <text evidence="1">The N-terminal coiled coil regions mediate homodimerization preferentially and heterodimerization type alpha/alpha. The C-terminal, non-coiled coil regions mediate heterodimerization type alpha/beta and interaction with PTPRD, PTPRF and PTPRS.</text>
</comment>
<comment type="mass spectrometry"/>
<comment type="similarity">
    <text evidence="11">Belongs to the liprin family. Liprin-alpha subfamily.</text>
</comment>
<comment type="sequence caution" evidence="11">
    <conflict type="erroneous initiation">
        <sequence resource="EMBL-CDS" id="AAL23696"/>
    </conflict>
    <text>Extended N-terminus.</text>
</comment>
<name>LIPA3_RAT</name>
<accession>Q91Z79</accession>